<sequence>MEARLLVLLCAFAATNADTICIGYHANNSTDTVDTVLEKNVTVTHSVNLLEDSHNGKLCKLKGIAPLQLGKCNIAGWLLGNPECDLLLTASSWSYIVETSNSENGTCYPGDFIDYEELREQLSSVSSFEKFEIFPKTSSWPNHETTKGVTAACSYAGASSFYRNLLWLTKKGSSYPKLSKSYVNNKGKEVLVLWGVHHPPTGTDQQSLYQNADAYVSVGSSKYNRRFTPEIAARPKVRDQAGRMNYYWTLLEPGDTITFEATGNLIAPWYAFALNRGSGSGIITSDAPVHDCNTKCQTPHGAINSSLPFQNIHPVTIGECPKYVRSTKLRMATGLRNIPSIQSRGLFGAIAGFIEGGWTGMIDGWYGYHHQNEQGSGYAADQKSTQNAIDGITNKVNSVIEKMNTQFTAVGKEFNNLERRIENLNKKVDDGFLDIWTYNAELLVLLENERTLDFHDSNVRNLYEKVKSQLKNNAKEIGNGCFEFYHKCDDACMESVRNGTYDYPKYSEESKLNREEIDGVKLESMGVYQILAIYSTVASSLVLLVSLGAISFWMCSNGSLQCRICI</sequence>
<proteinExistence type="evidence at protein level"/>
<protein>
    <recommendedName>
        <fullName evidence="2">Hemagglutinin</fullName>
    </recommendedName>
    <component>
        <recommendedName>
            <fullName evidence="2">Hemagglutinin HA1 chain</fullName>
        </recommendedName>
    </component>
    <component>
        <recommendedName>
            <fullName evidence="2">Hemagglutinin HA2 chain</fullName>
        </recommendedName>
    </component>
</protein>
<name>HEMA_I18A0</name>
<reference key="1">
    <citation type="journal article" date="1997" name="Science">
        <title>Initial genetic characterization of the 1918 'Spanish' influenza virus.</title>
        <authorList>
            <person name="Taubenberger J.K."/>
            <person name="Reid A.H."/>
            <person name="Krafft A.E."/>
            <person name="Bijwaard K.E."/>
            <person name="Fanning T.G."/>
        </authorList>
    </citation>
    <scope>NUCLEOTIDE SEQUENCE [GENOMIC RNA]</scope>
    <source>
        <strain>A/South Carolina/1/1918</strain>
    </source>
</reference>
<reference key="2">
    <citation type="journal article" date="1999" name="Proc. Natl. Acad. Sci. U.S.A.">
        <title>Origin and evolution of the 1918 'Spanish' influenza virus hemagglutinin gene.</title>
        <authorList>
            <person name="Reid A.H."/>
            <person name="Fanning T.G."/>
            <person name="Hultin J.V."/>
            <person name="Taubenberger J.K."/>
        </authorList>
    </citation>
    <scope>NUCLEOTIDE SEQUENCE [GENOMIC RNA]</scope>
    <scope>NUCLEOTIDE SEQUENCE [MRNA] OF 1-406</scope>
    <source>
        <strain>A/South Carolina/1/1918</strain>
    </source>
</reference>
<reference key="3">
    <citation type="journal article" date="2004" name="Science">
        <title>The structure and receptor binding properties of the 1918 influenza hemagglutinin.</title>
        <authorList>
            <person name="Gamblin S.J."/>
            <person name="Haire L.F."/>
            <person name="Russell R.J."/>
            <person name="Stevens D.J."/>
            <person name="Xiao B."/>
            <person name="Ha Y."/>
            <person name="Vasisht N."/>
            <person name="Steinhauer D.A."/>
            <person name="Daniels R.S."/>
            <person name="Elliot A."/>
            <person name="Wiley D.C."/>
            <person name="Skehel J.J."/>
        </authorList>
    </citation>
    <scope>X-RAY CRYSTALLOGRAPHY (2.9 ANGSTROMS) OF 14-339</scope>
    <source>
        <strain>A/South Carolina/1/1918</strain>
    </source>
</reference>
<reference key="4">
    <citation type="journal article" date="2004" name="Science">
        <title>Structure of the uncleaved human H1 hemagglutinin from the extinct 1918 influenza virus.</title>
        <authorList>
            <person name="Stevens J."/>
            <person name="Corper A.L."/>
            <person name="Basler C.F."/>
            <person name="Taubenberger J.K."/>
            <person name="Palese P."/>
            <person name="Wilson I.A."/>
        </authorList>
    </citation>
    <scope>X-RAY CRYSTALLOGRAPHY (3.0 ANGSTROMS) OF 18-344</scope>
    <source>
        <strain>A/South Carolina/1/1918</strain>
    </source>
</reference>
<dbReference type="EMBL" id="AF117241">
    <property type="protein sequence ID" value="AAD17229.1"/>
    <property type="molecule type" value="Genomic_RNA"/>
</dbReference>
<dbReference type="EMBL" id="AF116575">
    <property type="protein sequence ID" value="AAD17218.1"/>
    <property type="molecule type" value="mRNA"/>
</dbReference>
<dbReference type="PDB" id="1RD8">
    <property type="method" value="X-ray"/>
    <property type="resolution" value="3.00 A"/>
    <property type="chains" value="A/C/E=18-344, B/D/F=345-520"/>
</dbReference>
<dbReference type="PDB" id="1RUZ">
    <property type="method" value="X-ray"/>
    <property type="resolution" value="2.90 A"/>
    <property type="chains" value="H/J/L=14-339, I/K/M=345-504"/>
</dbReference>
<dbReference type="PDB" id="2WRG">
    <property type="method" value="X-ray"/>
    <property type="resolution" value="3.00 A"/>
    <property type="chains" value="H/J/L=18-343, I/K/M=345-566"/>
</dbReference>
<dbReference type="PDB" id="3GBN">
    <property type="method" value="X-ray"/>
    <property type="resolution" value="2.20 A"/>
    <property type="chains" value="A=18-344, B=345-520"/>
</dbReference>
<dbReference type="PDB" id="3LZF">
    <property type="method" value="X-ray"/>
    <property type="resolution" value="2.80 A"/>
    <property type="chains" value="A=18-344, B=345-520"/>
</dbReference>
<dbReference type="PDB" id="3R2X">
    <property type="method" value="X-ray"/>
    <property type="resolution" value="3.10 A"/>
    <property type="chains" value="A=18-344, B=345-520"/>
</dbReference>
<dbReference type="PDB" id="4EEF">
    <property type="method" value="X-ray"/>
    <property type="resolution" value="2.70 A"/>
    <property type="chains" value="A/C/E=18-344, B/D/F=345-520"/>
</dbReference>
<dbReference type="PDB" id="4GXU">
    <property type="method" value="X-ray"/>
    <property type="resolution" value="3.29 A"/>
    <property type="chains" value="A/C/E/G/I/K=18-344, B/D/F/H/J/L=345-520"/>
</dbReference>
<dbReference type="PDB" id="4GXX">
    <property type="method" value="X-ray"/>
    <property type="resolution" value="1.80 A"/>
    <property type="chains" value="A/C/E=18-344, B/D/F=345-520"/>
</dbReference>
<dbReference type="PDB" id="4JUG">
    <property type="method" value="X-ray"/>
    <property type="resolution" value="2.70 A"/>
    <property type="chains" value="A/C/E/G/I/K=18-339, B/D/F/H/J/L=345-514"/>
</dbReference>
<dbReference type="PDB" id="4JUH">
    <property type="method" value="X-ray"/>
    <property type="resolution" value="2.80 A"/>
    <property type="chains" value="A/C/E=18-339, B/D/F=345-514"/>
</dbReference>
<dbReference type="PDB" id="4JUJ">
    <property type="method" value="X-ray"/>
    <property type="resolution" value="3.01 A"/>
    <property type="chains" value="A/C/E=18-339, B/D/F=345-514"/>
</dbReference>
<dbReference type="PDB" id="4PY8">
    <property type="method" value="X-ray"/>
    <property type="resolution" value="2.91 A"/>
    <property type="chains" value="A=18-344, B=345-520"/>
</dbReference>
<dbReference type="PDB" id="5VMG">
    <property type="method" value="X-ray"/>
    <property type="resolution" value="2.45 A"/>
    <property type="chains" value="B/D/F=345-529"/>
</dbReference>
<dbReference type="PDB" id="5VMJ">
    <property type="method" value="X-ray"/>
    <property type="resolution" value="2.95 A"/>
    <property type="chains" value="B/D/F=345-529"/>
</dbReference>
<dbReference type="PDBsum" id="1RD8"/>
<dbReference type="PDBsum" id="1RUZ"/>
<dbReference type="PDBsum" id="2WRG"/>
<dbReference type="PDBsum" id="3GBN"/>
<dbReference type="PDBsum" id="3LZF"/>
<dbReference type="PDBsum" id="3R2X"/>
<dbReference type="PDBsum" id="4EEF"/>
<dbReference type="PDBsum" id="4GXU"/>
<dbReference type="PDBsum" id="4GXX"/>
<dbReference type="PDBsum" id="4JUG"/>
<dbReference type="PDBsum" id="4JUH"/>
<dbReference type="PDBsum" id="4JUJ"/>
<dbReference type="PDBsum" id="4PY8"/>
<dbReference type="PDBsum" id="5VMG"/>
<dbReference type="PDBsum" id="5VMJ"/>
<dbReference type="SMR" id="Q9WFX3"/>
<dbReference type="UniLectin" id="Q9WFX3"/>
<dbReference type="GlyCosmos" id="Q9WFX3">
    <property type="glycosylation" value="6 sites, No reported glycans"/>
</dbReference>
<dbReference type="ABCD" id="Q9WFX3">
    <property type="antibodies" value="9 sequenced antibodies"/>
</dbReference>
<dbReference type="EvolutionaryTrace" id="Q9WFX3"/>
<dbReference type="PRO" id="PR:Q9WFX3"/>
<dbReference type="Proteomes" id="UP000008430">
    <property type="component" value="Genome"/>
</dbReference>
<dbReference type="GO" id="GO:0020002">
    <property type="term" value="C:host cell plasma membrane"/>
    <property type="evidence" value="ECO:0007669"/>
    <property type="project" value="UniProtKB-SubCell"/>
</dbReference>
<dbReference type="GO" id="GO:0016020">
    <property type="term" value="C:membrane"/>
    <property type="evidence" value="ECO:0007669"/>
    <property type="project" value="UniProtKB-UniRule"/>
</dbReference>
<dbReference type="GO" id="GO:0019031">
    <property type="term" value="C:viral envelope"/>
    <property type="evidence" value="ECO:0007669"/>
    <property type="project" value="UniProtKB-UniRule"/>
</dbReference>
<dbReference type="GO" id="GO:0055036">
    <property type="term" value="C:virion membrane"/>
    <property type="evidence" value="ECO:0007669"/>
    <property type="project" value="UniProtKB-SubCell"/>
</dbReference>
<dbReference type="GO" id="GO:0046789">
    <property type="term" value="F:host cell surface receptor binding"/>
    <property type="evidence" value="ECO:0007669"/>
    <property type="project" value="UniProtKB-UniRule"/>
</dbReference>
<dbReference type="GO" id="GO:0075512">
    <property type="term" value="P:clathrin-dependent endocytosis of virus by host cell"/>
    <property type="evidence" value="ECO:0007669"/>
    <property type="project" value="UniProtKB-UniRule"/>
</dbReference>
<dbReference type="GO" id="GO:0039654">
    <property type="term" value="P:fusion of virus membrane with host endosome membrane"/>
    <property type="evidence" value="ECO:0007669"/>
    <property type="project" value="UniProtKB-UniRule"/>
</dbReference>
<dbReference type="GO" id="GO:0019064">
    <property type="term" value="P:fusion of virus membrane with host plasma membrane"/>
    <property type="evidence" value="ECO:0007669"/>
    <property type="project" value="InterPro"/>
</dbReference>
<dbReference type="GO" id="GO:0046761">
    <property type="term" value="P:viral budding from plasma membrane"/>
    <property type="evidence" value="ECO:0007669"/>
    <property type="project" value="UniProtKB-UniRule"/>
</dbReference>
<dbReference type="GO" id="GO:0019062">
    <property type="term" value="P:virion attachment to host cell"/>
    <property type="evidence" value="ECO:0007669"/>
    <property type="project" value="UniProtKB-KW"/>
</dbReference>
<dbReference type="FunFam" id="3.90.20.10:FF:000002">
    <property type="entry name" value="Hemagglutinin"/>
    <property type="match status" value="1"/>
</dbReference>
<dbReference type="Gene3D" id="3.90.20.10">
    <property type="match status" value="1"/>
</dbReference>
<dbReference type="Gene3D" id="3.90.209.20">
    <property type="match status" value="1"/>
</dbReference>
<dbReference type="Gene3D" id="2.10.77.10">
    <property type="entry name" value="Hemagglutinin Chain A, Domain 2"/>
    <property type="match status" value="1"/>
</dbReference>
<dbReference type="HAMAP" id="MF_04072">
    <property type="entry name" value="INFV_HEMA"/>
    <property type="match status" value="1"/>
</dbReference>
<dbReference type="InterPro" id="IPR008980">
    <property type="entry name" value="Capsid_hemagglutn"/>
</dbReference>
<dbReference type="InterPro" id="IPR013828">
    <property type="entry name" value="Hemagglutn_HA1_a/b_dom_sf"/>
</dbReference>
<dbReference type="InterPro" id="IPR000149">
    <property type="entry name" value="Hemagglutn_influenz_A"/>
</dbReference>
<dbReference type="InterPro" id="IPR001364">
    <property type="entry name" value="Hemagglutn_influenz_A/B"/>
</dbReference>
<dbReference type="Pfam" id="PF00509">
    <property type="entry name" value="Hemagglutinin"/>
    <property type="match status" value="1"/>
</dbReference>
<dbReference type="PRINTS" id="PR00330">
    <property type="entry name" value="HEMAGGLUTN1"/>
</dbReference>
<dbReference type="PRINTS" id="PR00329">
    <property type="entry name" value="HEMAGGLUTN12"/>
</dbReference>
<dbReference type="SUPFAM" id="SSF58064">
    <property type="entry name" value="Influenza hemagglutinin (stalk)"/>
    <property type="match status" value="1"/>
</dbReference>
<dbReference type="SUPFAM" id="SSF49818">
    <property type="entry name" value="Viral protein domain"/>
    <property type="match status" value="1"/>
</dbReference>
<comment type="function">
    <text evidence="2">Binds to sialic acid-containing receptors on the cell surface, bringing about the attachment of the virus particle to the cell. This attachment induces virion internalization either through clathrin-dependent endocytosis or through clathrin- and caveolin-independent pathway. Plays a major role in the determination of host range restriction and virulence. Class I viral fusion protein. Responsible for penetration of the virus into the cell cytoplasm by mediating the fusion of the membrane of the endocytosed virus particle with the endosomal membrane. Low pH in endosomes induces an irreversible conformational change in HA2, releasing the fusion hydrophobic peptide. Several trimers are required to form a competent fusion pore.</text>
</comment>
<comment type="subunit">
    <text evidence="1">Homotrimer of disulfide-linked HA1-HA2. Interacts with human CACNA1C.</text>
</comment>
<comment type="subcellular location">
    <subcellularLocation>
        <location evidence="2">Virion membrane</location>
        <topology evidence="2">Single-pass type I membrane protein</topology>
    </subcellularLocation>
    <subcellularLocation>
        <location evidence="2">Host apical cell membrane</location>
        <topology evidence="2">Single-pass type I membrane protein</topology>
    </subcellularLocation>
    <text evidence="2">Targeted to the apical plasma membrane in epithelial polarized cells through a signal present in the transmembrane domain. Associated with glycosphingolipid- and cholesterol-enriched detergent-resistant lipid rafts.</text>
</comment>
<comment type="PTM">
    <text evidence="2">Palmitoylated.</text>
</comment>
<comment type="PTM">
    <text evidence="2">In natural infection, inactive HA is matured into HA1 and HA2 outside the cell by one or more trypsin-like, arginine-specific endoprotease secreted by the bronchial epithelial cells. One identified protease that may be involved in this process is secreted in lungs by club cells.</text>
</comment>
<comment type="miscellaneous">
    <text>Major glycoprotein, comprises over 80% of the envelope proteins present in virus particle.</text>
</comment>
<comment type="miscellaneous">
    <text>The extent of infection into host organism is determined by HA. Influenza viruses bud from the apical surface of polarized epithelial cells (e.g. bronchial epithelial cells) into lumen of lungs and are therefore usually pneumotropic. The reason is that HA is cleaved by tryptase clara which is restricted to lungs. However, HAs of H5 and H7 pantropic avian viruses subtypes can be cleaved by furin and subtilisin-type enzymes, allowing the virus to grow in other organs than lungs.</text>
</comment>
<comment type="miscellaneous">
    <text>The influenza A genome consist of 8 RNA segments. Genetic variation of hemagglutinin and/or neuraminidase genes results in the emergence of new influenza strains. The mechanism of variation can be the result of point mutations or the result of genetic reassortment between segments of two different strains.</text>
</comment>
<comment type="miscellaneous">
    <text evidence="3">South Carolina isolate has been sequenced from formalid fixed-lung tissues of a 21-year-old male which died in 1918 at Ft. Jackson, SC. Brevig Mission isolate has been sequenced from lung tissues of an Inuit woman buried in the permafrost in a gravesite near Brevig Mission, Alaska. This sample was recovered by John Hultin, retired pathologist.</text>
</comment>
<comment type="similarity">
    <text evidence="2">Belongs to the influenza viruses hemagglutinin family.</text>
</comment>
<keyword id="KW-0002">3D-structure</keyword>
<keyword id="KW-1167">Clathrin- and caveolin-independent endocytosis of virus by host</keyword>
<keyword id="KW-1165">Clathrin-mediated endocytosis of virus by host</keyword>
<keyword id="KW-1015">Disulfide bond</keyword>
<keyword id="KW-1170">Fusion of virus membrane with host endosomal membrane</keyword>
<keyword id="KW-1168">Fusion of virus membrane with host membrane</keyword>
<keyword id="KW-0325">Glycoprotein</keyword>
<keyword id="KW-0348">Hemagglutinin</keyword>
<keyword id="KW-1032">Host cell membrane</keyword>
<keyword id="KW-1043">Host membrane</keyword>
<keyword id="KW-0945">Host-virus interaction</keyword>
<keyword id="KW-0449">Lipoprotein</keyword>
<keyword id="KW-0472">Membrane</keyword>
<keyword id="KW-0564">Palmitate</keyword>
<keyword id="KW-0732">Signal</keyword>
<keyword id="KW-0812">Transmembrane</keyword>
<keyword id="KW-1133">Transmembrane helix</keyword>
<keyword id="KW-1161">Viral attachment to host cell</keyword>
<keyword id="KW-0261">Viral envelope protein</keyword>
<keyword id="KW-1162">Viral penetration into host cytoplasm</keyword>
<keyword id="KW-0946">Virion</keyword>
<keyword id="KW-1164">Virus endocytosis by host</keyword>
<keyword id="KW-1160">Virus entry into host cell</keyword>
<evidence type="ECO:0000250" key="1">
    <source>
        <dbReference type="UniProtKB" id="Q289M7"/>
    </source>
</evidence>
<evidence type="ECO:0000255" key="2">
    <source>
        <dbReference type="HAMAP-Rule" id="MF_04072"/>
    </source>
</evidence>
<evidence type="ECO:0000305" key="3"/>
<evidence type="ECO:0007829" key="4">
    <source>
        <dbReference type="PDB" id="1RD8"/>
    </source>
</evidence>
<evidence type="ECO:0007829" key="5">
    <source>
        <dbReference type="PDB" id="1RUZ"/>
    </source>
</evidence>
<evidence type="ECO:0007829" key="6">
    <source>
        <dbReference type="PDB" id="3GBN"/>
    </source>
</evidence>
<evidence type="ECO:0007829" key="7">
    <source>
        <dbReference type="PDB" id="3LZF"/>
    </source>
</evidence>
<evidence type="ECO:0007829" key="8">
    <source>
        <dbReference type="PDB" id="4GXU"/>
    </source>
</evidence>
<evidence type="ECO:0007829" key="9">
    <source>
        <dbReference type="PDB" id="4GXX"/>
    </source>
</evidence>
<evidence type="ECO:0007829" key="10">
    <source>
        <dbReference type="PDB" id="4JUG"/>
    </source>
</evidence>
<accession>Q9WFX3</accession>
<accession>O10424</accession>
<accession>O10425</accession>
<accession>O10426</accession>
<accession>Q9WFZ1</accession>
<feature type="signal peptide" evidence="2">
    <location>
        <begin position="1"/>
        <end position="17"/>
    </location>
</feature>
<feature type="chain" id="PRO_0000440372" description="Hemagglutinin" evidence="2">
    <location>
        <begin position="18"/>
        <end position="566"/>
    </location>
</feature>
<feature type="chain" id="PRO_0000310563" description="Hemagglutinin HA1 chain" evidence="2">
    <location>
        <begin position="18"/>
        <end position="343"/>
    </location>
</feature>
<feature type="chain" id="PRO_0000310564" description="Hemagglutinin HA2 chain" evidence="2">
    <location>
        <begin position="345"/>
        <end position="566"/>
    </location>
</feature>
<feature type="topological domain" description="Extracellular" evidence="2">
    <location>
        <begin position="18"/>
        <end position="529"/>
    </location>
</feature>
<feature type="transmembrane region" description="Helical" evidence="2">
    <location>
        <begin position="530"/>
        <end position="550"/>
    </location>
</feature>
<feature type="topological domain" description="Cytoplasmic" evidence="2">
    <location>
        <begin position="551"/>
        <end position="566"/>
    </location>
</feature>
<feature type="site" description="Cleavage; by host" evidence="2">
    <location>
        <begin position="344"/>
        <end position="345"/>
    </location>
</feature>
<feature type="lipid moiety-binding region" description="S-palmitoyl cysteine; by host" evidence="2">
    <location>
        <position position="555"/>
    </location>
</feature>
<feature type="lipid moiety-binding region" description="S-palmitoyl cysteine; by host" evidence="2">
    <location>
        <position position="562"/>
    </location>
</feature>
<feature type="lipid moiety-binding region" description="S-palmitoyl cysteine; by host" evidence="2">
    <location>
        <position position="565"/>
    </location>
</feature>
<feature type="glycosylation site" description="N-linked (GlcNAc...) asparagine; by host" evidence="2">
    <location>
        <position position="27"/>
    </location>
</feature>
<feature type="glycosylation site" description="N-linked (GlcNAc...) asparagine; by host" evidence="2">
    <location>
        <position position="28"/>
    </location>
</feature>
<feature type="glycosylation site" description="N-linked (GlcNAc...) asparagine; by host" evidence="2">
    <location>
        <position position="40"/>
    </location>
</feature>
<feature type="glycosylation site" description="N-linked (GlcNAc...) asparagine; by host" evidence="2">
    <location>
        <position position="104"/>
    </location>
</feature>
<feature type="glycosylation site" description="N-linked (GlcNAc...) asparagine; by host" evidence="2">
    <location>
        <position position="304"/>
    </location>
</feature>
<feature type="glycosylation site" description="N-linked (GlcNAc...) asparagine; by host" evidence="2">
    <location>
        <position position="498"/>
    </location>
</feature>
<feature type="disulfide bond" description="Interchain (between HA1 and HA2 chains)" evidence="2">
    <location>
        <begin position="21"/>
        <end position="481"/>
    </location>
</feature>
<feature type="disulfide bond" evidence="2">
    <location>
        <begin position="59"/>
        <end position="292"/>
    </location>
</feature>
<feature type="disulfide bond" evidence="2">
    <location>
        <begin position="72"/>
        <end position="84"/>
    </location>
</feature>
<feature type="disulfide bond" evidence="2">
    <location>
        <begin position="107"/>
        <end position="153"/>
    </location>
</feature>
<feature type="disulfide bond" evidence="2">
    <location>
        <begin position="296"/>
        <end position="320"/>
    </location>
</feature>
<feature type="disulfide bond" evidence="2">
    <location>
        <begin position="488"/>
        <end position="492"/>
    </location>
</feature>
<feature type="strand" evidence="9">
    <location>
        <begin position="18"/>
        <end position="25"/>
    </location>
</feature>
<feature type="strand" evidence="7">
    <location>
        <begin position="31"/>
        <end position="33"/>
    </location>
</feature>
<feature type="strand" evidence="9">
    <location>
        <begin position="39"/>
        <end position="44"/>
    </location>
</feature>
<feature type="strand" evidence="9">
    <location>
        <begin position="46"/>
        <end position="48"/>
    </location>
</feature>
<feature type="strand" evidence="9">
    <location>
        <begin position="56"/>
        <end position="61"/>
    </location>
</feature>
<feature type="strand" evidence="9">
    <location>
        <begin position="67"/>
        <end position="70"/>
    </location>
</feature>
<feature type="helix" evidence="9">
    <location>
        <begin position="74"/>
        <end position="79"/>
    </location>
</feature>
<feature type="helix" evidence="9">
    <location>
        <begin position="82"/>
        <end position="87"/>
    </location>
</feature>
<feature type="strand" evidence="9">
    <location>
        <begin position="94"/>
        <end position="98"/>
    </location>
</feature>
<feature type="strand" evidence="10">
    <location>
        <begin position="108"/>
        <end position="110"/>
    </location>
</feature>
<feature type="helix" evidence="9">
    <location>
        <begin position="115"/>
        <end position="122"/>
    </location>
</feature>
<feature type="strand" evidence="9">
    <location>
        <begin position="125"/>
        <end position="134"/>
    </location>
</feature>
<feature type="turn" evidence="9">
    <location>
        <begin position="136"/>
        <end position="138"/>
    </location>
</feature>
<feature type="strand" evidence="10">
    <location>
        <begin position="143"/>
        <end position="147"/>
    </location>
</feature>
<feature type="strand" evidence="9">
    <location>
        <begin position="150"/>
        <end position="155"/>
    </location>
</feature>
<feature type="strand" evidence="9">
    <location>
        <begin position="158"/>
        <end position="160"/>
    </location>
</feature>
<feature type="strand" evidence="9">
    <location>
        <begin position="163"/>
        <end position="167"/>
    </location>
</feature>
<feature type="strand" evidence="6">
    <location>
        <begin position="171"/>
        <end position="173"/>
    </location>
</feature>
<feature type="strand" evidence="9">
    <location>
        <begin position="178"/>
        <end position="183"/>
    </location>
</feature>
<feature type="strand" evidence="9">
    <location>
        <begin position="186"/>
        <end position="188"/>
    </location>
</feature>
<feature type="strand" evidence="9">
    <location>
        <begin position="190"/>
        <end position="198"/>
    </location>
</feature>
<feature type="helix" evidence="9">
    <location>
        <begin position="202"/>
        <end position="209"/>
    </location>
</feature>
<feature type="strand" evidence="9">
    <location>
        <begin position="216"/>
        <end position="219"/>
    </location>
</feature>
<feature type="strand" evidence="9">
    <location>
        <begin position="224"/>
        <end position="227"/>
    </location>
</feature>
<feature type="strand" evidence="6">
    <location>
        <begin position="237"/>
        <end position="239"/>
    </location>
</feature>
<feature type="strand" evidence="9">
    <location>
        <begin position="240"/>
        <end position="251"/>
    </location>
</feature>
<feature type="strand" evidence="9">
    <location>
        <begin position="256"/>
        <end position="263"/>
    </location>
</feature>
<feature type="strand" evidence="9">
    <location>
        <begin position="265"/>
        <end position="268"/>
    </location>
</feature>
<feature type="strand" evidence="9">
    <location>
        <begin position="270"/>
        <end position="276"/>
    </location>
</feature>
<feature type="strand" evidence="9">
    <location>
        <begin position="282"/>
        <end position="284"/>
    </location>
</feature>
<feature type="strand" evidence="9">
    <location>
        <begin position="289"/>
        <end position="297"/>
    </location>
</feature>
<feature type="strand" evidence="6">
    <location>
        <begin position="301"/>
        <end position="303"/>
    </location>
</feature>
<feature type="strand" evidence="9">
    <location>
        <begin position="308"/>
        <end position="310"/>
    </location>
</feature>
<feature type="strand" evidence="9">
    <location>
        <begin position="316"/>
        <end position="320"/>
    </location>
</feature>
<feature type="strand" evidence="9">
    <location>
        <begin position="330"/>
        <end position="332"/>
    </location>
</feature>
<feature type="strand" evidence="4">
    <location>
        <begin position="336"/>
        <end position="338"/>
    </location>
</feature>
<feature type="turn" evidence="4">
    <location>
        <begin position="341"/>
        <end position="346"/>
    </location>
</feature>
<feature type="turn" evidence="9">
    <location>
        <begin position="351"/>
        <end position="353"/>
    </location>
</feature>
<feature type="strand" evidence="5">
    <location>
        <begin position="358"/>
        <end position="360"/>
    </location>
</feature>
<feature type="strand" evidence="9">
    <location>
        <begin position="365"/>
        <end position="372"/>
    </location>
</feature>
<feature type="strand" evidence="9">
    <location>
        <begin position="375"/>
        <end position="380"/>
    </location>
</feature>
<feature type="helix" evidence="9">
    <location>
        <begin position="382"/>
        <end position="402"/>
    </location>
</feature>
<feature type="strand" evidence="9">
    <location>
        <begin position="406"/>
        <end position="409"/>
    </location>
</feature>
<feature type="helix" evidence="8">
    <location>
        <begin position="416"/>
        <end position="418"/>
    </location>
</feature>
<feature type="helix" evidence="9">
    <location>
        <begin position="419"/>
        <end position="470"/>
    </location>
</feature>
<feature type="helix" evidence="9">
    <location>
        <begin position="471"/>
        <end position="473"/>
    </location>
</feature>
<feature type="strand" evidence="9">
    <location>
        <begin position="474"/>
        <end position="476"/>
    </location>
</feature>
<feature type="strand" evidence="9">
    <location>
        <begin position="478"/>
        <end position="486"/>
    </location>
</feature>
<feature type="helix" evidence="9">
    <location>
        <begin position="490"/>
        <end position="497"/>
    </location>
</feature>
<feature type="helix" evidence="9">
    <location>
        <begin position="503"/>
        <end position="513"/>
    </location>
</feature>
<organism>
    <name type="scientific">Influenza A virus (strain A/Brevig Mission/1/1918 H1N1)</name>
    <name type="common">Influenza A virus (strain A/South Carolina/1/1918 H1N1)</name>
    <dbReference type="NCBI Taxonomy" id="88776"/>
    <lineage>
        <taxon>Viruses</taxon>
        <taxon>Riboviria</taxon>
        <taxon>Orthornavirae</taxon>
        <taxon>Negarnaviricota</taxon>
        <taxon>Polyploviricotina</taxon>
        <taxon>Insthoviricetes</taxon>
        <taxon>Articulavirales</taxon>
        <taxon>Orthomyxoviridae</taxon>
        <taxon>Alphainfluenzavirus</taxon>
        <taxon>Alphainfluenzavirus influenzae</taxon>
        <taxon>Influenza A virus</taxon>
    </lineage>
</organism>
<gene>
    <name evidence="2" type="primary">HA</name>
</gene>
<organismHost>
    <name type="scientific">Aves</name>
    <dbReference type="NCBI Taxonomy" id="8782"/>
</organismHost>
<organismHost>
    <name type="scientific">Homo sapiens</name>
    <name type="common">Human</name>
    <dbReference type="NCBI Taxonomy" id="9606"/>
</organismHost>
<organismHost>
    <name type="scientific">Sus scrofa</name>
    <name type="common">Pig</name>
    <dbReference type="NCBI Taxonomy" id="9823"/>
</organismHost>